<proteinExistence type="evidence at protein level"/>
<reference key="1">
    <citation type="journal article" date="1993" name="Int. J. Biochem.">
        <title>Cloning and sequence analysis of A cDNA encoding bovine cytosolic aspartate aminotransferase.</title>
        <authorList>
            <person name="Aurilia V."/>
            <person name="Palmisano A."/>
            <person name="Ferrara L."/>
            <person name="Cubellis M.V."/>
            <person name="Sannia G."/>
            <person name="Marino G."/>
        </authorList>
    </citation>
    <scope>NUCLEOTIDE SEQUENCE [MRNA]</scope>
    <source>
        <tissue>Heart</tissue>
    </source>
</reference>
<reference key="2">
    <citation type="journal article" date="2005" name="BMC Genomics">
        <title>Characterization of 954 bovine full-CDS cDNA sequences.</title>
        <authorList>
            <person name="Harhay G.P."/>
            <person name="Sonstegard T.S."/>
            <person name="Keele J.W."/>
            <person name="Heaton M.P."/>
            <person name="Clawson M.L."/>
            <person name="Snelling W.M."/>
            <person name="Wiedmann R.T."/>
            <person name="Van Tassell C.P."/>
            <person name="Smith T.P.L."/>
        </authorList>
    </citation>
    <scope>NUCLEOTIDE SEQUENCE [LARGE SCALE MRNA]</scope>
</reference>
<reference key="3">
    <citation type="submission" date="2005-09" db="EMBL/GenBank/DDBJ databases">
        <authorList>
            <consortium name="NIH - Mammalian Gene Collection (MGC) project"/>
        </authorList>
    </citation>
    <scope>NUCLEOTIDE SEQUENCE [LARGE SCALE MRNA]</scope>
    <source>
        <strain>Crossbred X Angus</strain>
        <tissue>Liver</tissue>
    </source>
</reference>
<comment type="function">
    <text evidence="2">Biosynthesis of L-glutamate from L-aspartate or L-cysteine. Important regulator of levels of glutamate, the major excitatory neurotransmitter of the vertebrate central nervous system. Acts as a scavenger of glutamate in brain neuroprotection. The aspartate aminotransferase activity is involved in hepatic glucose synthesis during development and in adipocyte glyceroneogenesis. Using L-cysteine as substrate, regulates levels of mercaptopyruvate, an important source of hydrogen sulfide. Mercaptopyruvate is converted into H(2)S via the action of 3-mercaptopyruvate sulfurtransferase (3MST). Hydrogen sulfide is an important synaptic modulator and neuroprotectant in the brain.</text>
</comment>
<comment type="catalytic activity">
    <reaction evidence="2">
        <text>L-aspartate + 2-oxoglutarate = oxaloacetate + L-glutamate</text>
        <dbReference type="Rhea" id="RHEA:21824"/>
        <dbReference type="ChEBI" id="CHEBI:16452"/>
        <dbReference type="ChEBI" id="CHEBI:16810"/>
        <dbReference type="ChEBI" id="CHEBI:29985"/>
        <dbReference type="ChEBI" id="CHEBI:29991"/>
        <dbReference type="EC" id="2.6.1.1"/>
    </reaction>
    <physiologicalReaction direction="left-to-right" evidence="2">
        <dbReference type="Rhea" id="RHEA:21825"/>
    </physiologicalReaction>
</comment>
<comment type="catalytic activity">
    <reaction evidence="2">
        <text>L-cysteine + 2-oxoglutarate = 2-oxo-3-sulfanylpropanoate + L-glutamate</text>
        <dbReference type="Rhea" id="RHEA:17441"/>
        <dbReference type="ChEBI" id="CHEBI:16810"/>
        <dbReference type="ChEBI" id="CHEBI:29985"/>
        <dbReference type="ChEBI" id="CHEBI:35235"/>
        <dbReference type="ChEBI" id="CHEBI:57678"/>
        <dbReference type="EC" id="2.6.1.3"/>
    </reaction>
    <physiologicalReaction direction="left-to-right" evidence="2">
        <dbReference type="Rhea" id="RHEA:17442"/>
    </physiologicalReaction>
</comment>
<comment type="catalytic activity">
    <reaction evidence="3">
        <text>(2S)-2-aminobutanoate + 2-oxoglutarate = 2-oxobutanoate + L-glutamate</text>
        <dbReference type="Rhea" id="RHEA:70223"/>
        <dbReference type="ChEBI" id="CHEBI:16763"/>
        <dbReference type="ChEBI" id="CHEBI:16810"/>
        <dbReference type="ChEBI" id="CHEBI:29985"/>
        <dbReference type="ChEBI" id="CHEBI:74359"/>
    </reaction>
    <physiologicalReaction direction="right-to-left" evidence="3">
        <dbReference type="Rhea" id="RHEA:70225"/>
    </physiologicalReaction>
</comment>
<comment type="catalytic activity">
    <reaction evidence="2">
        <text>3-sulfino-L-alanine + 2-oxoglutarate = 3-sulfinopyruvate + L-glutamate</text>
        <dbReference type="Rhea" id="RHEA:70295"/>
        <dbReference type="ChEBI" id="CHEBI:16810"/>
        <dbReference type="ChEBI" id="CHEBI:29985"/>
        <dbReference type="ChEBI" id="CHEBI:61085"/>
        <dbReference type="ChEBI" id="CHEBI:140699"/>
    </reaction>
    <physiologicalReaction direction="right-to-left" evidence="2">
        <dbReference type="Rhea" id="RHEA:70297"/>
    </physiologicalReaction>
</comment>
<comment type="cofactor">
    <cofactor>
        <name>pyridoxal 5'-phosphate</name>
        <dbReference type="ChEBI" id="CHEBI:597326"/>
    </cofactor>
</comment>
<comment type="subunit">
    <text>Homodimer.</text>
</comment>
<comment type="subcellular location">
    <subcellularLocation>
        <location>Cytoplasm</location>
    </subcellularLocation>
</comment>
<comment type="miscellaneous">
    <text>In eukaryotes there are cytoplasmic, mitochondrial and chloroplastic isozymes.</text>
</comment>
<comment type="similarity">
    <text evidence="4">Belongs to the class-I pyridoxal-phosphate-dependent aminotransferase family.</text>
</comment>
<dbReference type="EC" id="2.6.1.1" evidence="2"/>
<dbReference type="EC" id="2.6.1.3" evidence="2"/>
<dbReference type="EMBL" id="X66020">
    <property type="protein sequence ID" value="CAA46818.1"/>
    <property type="molecule type" value="mRNA"/>
</dbReference>
<dbReference type="EMBL" id="BT020856">
    <property type="protein sequence ID" value="AAX08873.1"/>
    <property type="molecule type" value="mRNA"/>
</dbReference>
<dbReference type="EMBL" id="BC105372">
    <property type="protein sequence ID" value="AAI05373.1"/>
    <property type="molecule type" value="mRNA"/>
</dbReference>
<dbReference type="PIR" id="I46006">
    <property type="entry name" value="S21560"/>
</dbReference>
<dbReference type="RefSeq" id="NP_803468.1">
    <property type="nucleotide sequence ID" value="NM_177502.2"/>
</dbReference>
<dbReference type="SMR" id="P33097"/>
<dbReference type="FunCoup" id="P33097">
    <property type="interactions" value="1917"/>
</dbReference>
<dbReference type="STRING" id="9913.ENSBTAP00000015873"/>
<dbReference type="Allergome" id="11908">
    <property type="allergen name" value="Bos d AATr"/>
</dbReference>
<dbReference type="PaxDb" id="9913-ENSBTAP00000015873"/>
<dbReference type="PeptideAtlas" id="P33097"/>
<dbReference type="Ensembl" id="ENSBTAT00000015873.6">
    <property type="protein sequence ID" value="ENSBTAP00000015873.4"/>
    <property type="gene ID" value="ENSBTAG00000011960.6"/>
</dbReference>
<dbReference type="GeneID" id="281206"/>
<dbReference type="KEGG" id="bta:281206"/>
<dbReference type="CTD" id="2805"/>
<dbReference type="VEuPathDB" id="HostDB:ENSBTAG00000011960"/>
<dbReference type="VGNC" id="VGNC:29501">
    <property type="gene designation" value="GOT1"/>
</dbReference>
<dbReference type="eggNOG" id="KOG1412">
    <property type="taxonomic scope" value="Eukaryota"/>
</dbReference>
<dbReference type="GeneTree" id="ENSGT00950000183082"/>
<dbReference type="HOGENOM" id="CLU_032440_1_2_1"/>
<dbReference type="InParanoid" id="P33097"/>
<dbReference type="OMA" id="GTWTHIT"/>
<dbReference type="OrthoDB" id="6752799at2759"/>
<dbReference type="TreeFam" id="TF314089"/>
<dbReference type="Reactome" id="R-BTA-8963693">
    <property type="pathway name" value="Aspartate and asparagine metabolism"/>
</dbReference>
<dbReference type="Reactome" id="R-BTA-9856872">
    <property type="pathway name" value="Malate-aspartate shuttle"/>
</dbReference>
<dbReference type="Proteomes" id="UP000009136">
    <property type="component" value="Chromosome 26"/>
</dbReference>
<dbReference type="Bgee" id="ENSBTAG00000011960">
    <property type="expression patterns" value="Expressed in retina and 103 other cell types or tissues"/>
</dbReference>
<dbReference type="GO" id="GO:0005829">
    <property type="term" value="C:cytosol"/>
    <property type="evidence" value="ECO:0000318"/>
    <property type="project" value="GO_Central"/>
</dbReference>
<dbReference type="GO" id="GO:0004069">
    <property type="term" value="F:L-aspartate:2-oxoglutarate aminotransferase activity"/>
    <property type="evidence" value="ECO:0000318"/>
    <property type="project" value="GO_Central"/>
</dbReference>
<dbReference type="GO" id="GO:0047801">
    <property type="term" value="F:L-cysteine transaminase activity"/>
    <property type="evidence" value="ECO:0000250"/>
    <property type="project" value="UniProtKB"/>
</dbReference>
<dbReference type="GO" id="GO:0004609">
    <property type="term" value="F:phosphatidylserine decarboxylase activity"/>
    <property type="evidence" value="ECO:0007669"/>
    <property type="project" value="Ensembl"/>
</dbReference>
<dbReference type="GO" id="GO:0030170">
    <property type="term" value="F:pyridoxal phosphate binding"/>
    <property type="evidence" value="ECO:0007669"/>
    <property type="project" value="InterPro"/>
</dbReference>
<dbReference type="GO" id="GO:0006532">
    <property type="term" value="P:aspartate biosynthetic process"/>
    <property type="evidence" value="ECO:0000318"/>
    <property type="project" value="GO_Central"/>
</dbReference>
<dbReference type="GO" id="GO:0006533">
    <property type="term" value="P:aspartate catabolic process"/>
    <property type="evidence" value="ECO:0007669"/>
    <property type="project" value="Ensembl"/>
</dbReference>
<dbReference type="GO" id="GO:0032869">
    <property type="term" value="P:cellular response to insulin stimulus"/>
    <property type="evidence" value="ECO:0007669"/>
    <property type="project" value="Ensembl"/>
</dbReference>
<dbReference type="GO" id="GO:0055089">
    <property type="term" value="P:fatty acid homeostasis"/>
    <property type="evidence" value="ECO:0007669"/>
    <property type="project" value="Ensembl"/>
</dbReference>
<dbReference type="GO" id="GO:0006094">
    <property type="term" value="P:gluconeogenesis"/>
    <property type="evidence" value="ECO:0007669"/>
    <property type="project" value="Ensembl"/>
</dbReference>
<dbReference type="GO" id="GO:0019550">
    <property type="term" value="P:glutamate catabolic process to aspartate"/>
    <property type="evidence" value="ECO:0007669"/>
    <property type="project" value="Ensembl"/>
</dbReference>
<dbReference type="GO" id="GO:0006114">
    <property type="term" value="P:glycerol biosynthetic process"/>
    <property type="evidence" value="ECO:0000250"/>
    <property type="project" value="UniProtKB"/>
</dbReference>
<dbReference type="GO" id="GO:0043490">
    <property type="term" value="P:malate-aspartate shuttle"/>
    <property type="evidence" value="ECO:0007669"/>
    <property type="project" value="Ensembl"/>
</dbReference>
<dbReference type="GO" id="GO:0007219">
    <property type="term" value="P:Notch signaling pathway"/>
    <property type="evidence" value="ECO:0007669"/>
    <property type="project" value="Ensembl"/>
</dbReference>
<dbReference type="GO" id="GO:0006107">
    <property type="term" value="P:oxaloacetate metabolic process"/>
    <property type="evidence" value="ECO:0007669"/>
    <property type="project" value="Ensembl"/>
</dbReference>
<dbReference type="GO" id="GO:0051384">
    <property type="term" value="P:response to glucocorticoid"/>
    <property type="evidence" value="ECO:0007669"/>
    <property type="project" value="Ensembl"/>
</dbReference>
<dbReference type="CDD" id="cd00609">
    <property type="entry name" value="AAT_like"/>
    <property type="match status" value="1"/>
</dbReference>
<dbReference type="FunFam" id="3.40.640.10:FF:000044">
    <property type="entry name" value="Aspartate aminotransferase"/>
    <property type="match status" value="1"/>
</dbReference>
<dbReference type="FunFam" id="3.90.1150.10:FF:000001">
    <property type="entry name" value="Aspartate aminotransferase"/>
    <property type="match status" value="1"/>
</dbReference>
<dbReference type="Gene3D" id="3.90.1150.10">
    <property type="entry name" value="Aspartate Aminotransferase, domain 1"/>
    <property type="match status" value="1"/>
</dbReference>
<dbReference type="Gene3D" id="3.40.640.10">
    <property type="entry name" value="Type I PLP-dependent aspartate aminotransferase-like (Major domain)"/>
    <property type="match status" value="1"/>
</dbReference>
<dbReference type="InterPro" id="IPR004839">
    <property type="entry name" value="Aminotransferase_I/II_large"/>
</dbReference>
<dbReference type="InterPro" id="IPR000796">
    <property type="entry name" value="Asp_trans"/>
</dbReference>
<dbReference type="InterPro" id="IPR004838">
    <property type="entry name" value="NHTrfase_class1_PyrdxlP-BS"/>
</dbReference>
<dbReference type="InterPro" id="IPR015424">
    <property type="entry name" value="PyrdxlP-dep_Trfase"/>
</dbReference>
<dbReference type="InterPro" id="IPR015421">
    <property type="entry name" value="PyrdxlP-dep_Trfase_major"/>
</dbReference>
<dbReference type="InterPro" id="IPR015422">
    <property type="entry name" value="PyrdxlP-dep_Trfase_small"/>
</dbReference>
<dbReference type="NCBIfam" id="NF006719">
    <property type="entry name" value="PRK09257.1"/>
    <property type="match status" value="1"/>
</dbReference>
<dbReference type="PANTHER" id="PTHR11879">
    <property type="entry name" value="ASPARTATE AMINOTRANSFERASE"/>
    <property type="match status" value="1"/>
</dbReference>
<dbReference type="PANTHER" id="PTHR11879:SF3">
    <property type="entry name" value="ASPARTATE AMINOTRANSFERASE, CYTOPLASMIC"/>
    <property type="match status" value="1"/>
</dbReference>
<dbReference type="Pfam" id="PF00155">
    <property type="entry name" value="Aminotran_1_2"/>
    <property type="match status" value="1"/>
</dbReference>
<dbReference type="PRINTS" id="PR00799">
    <property type="entry name" value="TRANSAMINASE"/>
</dbReference>
<dbReference type="SUPFAM" id="SSF53383">
    <property type="entry name" value="PLP-dependent transferases"/>
    <property type="match status" value="1"/>
</dbReference>
<dbReference type="PROSITE" id="PS00105">
    <property type="entry name" value="AA_TRANSFER_CLASS_1"/>
    <property type="match status" value="1"/>
</dbReference>
<evidence type="ECO:0000250" key="1"/>
<evidence type="ECO:0000250" key="2">
    <source>
        <dbReference type="UniProtKB" id="P13221"/>
    </source>
</evidence>
<evidence type="ECO:0000250" key="3">
    <source>
        <dbReference type="UniProtKB" id="P17174"/>
    </source>
</evidence>
<evidence type="ECO:0000305" key="4"/>
<name>AATC_BOVIN</name>
<gene>
    <name evidence="3" type="primary">GOT1</name>
</gene>
<protein>
    <recommendedName>
        <fullName evidence="3">Aspartate aminotransferase, cytoplasmic</fullName>
        <shortName>cAspAT</shortName>
        <ecNumber evidence="2">2.6.1.1</ecNumber>
        <ecNumber evidence="2">2.6.1.3</ecNumber>
    </recommendedName>
    <alternativeName>
        <fullName>Cysteine aminotransferase, cytoplasmic</fullName>
    </alternativeName>
    <alternativeName>
        <fullName>Cysteine transaminase, cytoplasmic</fullName>
        <shortName>cCAT</shortName>
    </alternativeName>
    <alternativeName>
        <fullName>Glutamate oxaloacetate transaminase 1</fullName>
    </alternativeName>
    <alternativeName>
        <fullName>Transaminase A</fullName>
    </alternativeName>
</protein>
<keyword id="KW-0028">Amino-acid biosynthesis</keyword>
<keyword id="KW-0032">Aminotransferase</keyword>
<keyword id="KW-0963">Cytoplasm</keyword>
<keyword id="KW-0663">Pyridoxal phosphate</keyword>
<keyword id="KW-1185">Reference proteome</keyword>
<keyword id="KW-0808">Transferase</keyword>
<feature type="chain" id="PRO_0000123877" description="Aspartate aminotransferase, cytoplasmic">
    <location>
        <begin position="1"/>
        <end position="413"/>
    </location>
</feature>
<feature type="binding site" evidence="1">
    <location>
        <position position="39"/>
    </location>
    <ligand>
        <name>L-aspartate</name>
        <dbReference type="ChEBI" id="CHEBI:29991"/>
    </ligand>
</feature>
<feature type="binding site" evidence="1">
    <location>
        <position position="141"/>
    </location>
    <ligand>
        <name>L-aspartate</name>
        <dbReference type="ChEBI" id="CHEBI:29991"/>
    </ligand>
</feature>
<feature type="binding site" evidence="1">
    <location>
        <position position="195"/>
    </location>
    <ligand>
        <name>L-aspartate</name>
        <dbReference type="ChEBI" id="CHEBI:29991"/>
    </ligand>
</feature>
<feature type="binding site" evidence="1">
    <location>
        <position position="387"/>
    </location>
    <ligand>
        <name>L-aspartate</name>
        <dbReference type="ChEBI" id="CHEBI:29991"/>
    </ligand>
</feature>
<feature type="modified residue" description="N6-(pyridoxal phosphate)lysine">
    <location>
        <position position="259"/>
    </location>
</feature>
<feature type="sequence conflict" description="In Ref. 1; CAA46818." evidence="4" ref="1">
    <original>G</original>
    <variation>A</variation>
    <location>
        <position position="228"/>
    </location>
</feature>
<accession>P33097</accession>
<accession>Q2KJF2</accession>
<accession>Q5E9R4</accession>
<organism>
    <name type="scientific">Bos taurus</name>
    <name type="common">Bovine</name>
    <dbReference type="NCBI Taxonomy" id="9913"/>
    <lineage>
        <taxon>Eukaryota</taxon>
        <taxon>Metazoa</taxon>
        <taxon>Chordata</taxon>
        <taxon>Craniata</taxon>
        <taxon>Vertebrata</taxon>
        <taxon>Euteleostomi</taxon>
        <taxon>Mammalia</taxon>
        <taxon>Eutheria</taxon>
        <taxon>Laurasiatheria</taxon>
        <taxon>Artiodactyla</taxon>
        <taxon>Ruminantia</taxon>
        <taxon>Pecora</taxon>
        <taxon>Bovidae</taxon>
        <taxon>Bovinae</taxon>
        <taxon>Bos</taxon>
    </lineage>
</organism>
<sequence>MAPPSIFAEVPQAQPVLVFKLTADFREDPDPRKVNLGVGAYRTDDSQPWVLPVVRKVEQRIANDSSINHEYLPILGLAEFRTCASRLALGDDSPALQEKRVGGVQCLGGTGALRIGAEFLARWYNGTNNKDTPVYVSSPTWENHNGVFIAAGFKDIRSYHYWDAAKRGLDLQGFLNDLEKAPEFSIFVLHACAHNPTGTDPTPEQWKQIASVMKRRFLFPFFDSAYQGFASGSLEKDAWAIRYFVSEGFELFCAQSFSKNFGLYNERVGNLTVVAKEPDSILRVLSQMEKIVRITWSNPPAQGARIVARTLSDPELFNEWTGNVKTMADRILTMRSELRARLEALKTPGTWNHITEQIGMFSFTGLNPKQVEYLINEKHIYLLPSGRINMCGLTTKNLEYVATSIHEAVTKIQ</sequence>